<proteinExistence type="inferred from homology"/>
<feature type="chain" id="PRO_0000152047" description="Leucine--tRNA ligase">
    <location>
        <begin position="1"/>
        <end position="804"/>
    </location>
</feature>
<feature type="short sequence motif" description="'HIGH' region">
    <location>
        <begin position="39"/>
        <end position="50"/>
    </location>
</feature>
<feature type="short sequence motif" description="'KMSKS' region">
    <location>
        <begin position="580"/>
        <end position="584"/>
    </location>
</feature>
<feature type="binding site" evidence="1">
    <location>
        <position position="583"/>
    </location>
    <ligand>
        <name>ATP</name>
        <dbReference type="ChEBI" id="CHEBI:30616"/>
    </ligand>
</feature>
<reference key="1">
    <citation type="journal article" date="2004" name="Genome Res.">
        <title>The genome sequence of Mycoplasma mycoides subsp. mycoides SC type strain PG1T, the causative agent of contagious bovine pleuropneumonia (CBPP).</title>
        <authorList>
            <person name="Westberg J."/>
            <person name="Persson A."/>
            <person name="Holmberg A."/>
            <person name="Goesmann A."/>
            <person name="Lundeberg J."/>
            <person name="Johansson K.-E."/>
            <person name="Pettersson B."/>
            <person name="Uhlen M."/>
        </authorList>
    </citation>
    <scope>NUCLEOTIDE SEQUENCE [LARGE SCALE GENOMIC DNA]</scope>
    <source>
        <strain>CCUG 32753 / NCTC 10114 / PG1</strain>
    </source>
</reference>
<dbReference type="EC" id="6.1.1.4" evidence="1"/>
<dbReference type="EMBL" id="BX293980">
    <property type="protein sequence ID" value="CAE77328.1"/>
    <property type="status" value="ALT_INIT"/>
    <property type="molecule type" value="Genomic_DNA"/>
</dbReference>
<dbReference type="RefSeq" id="NP_975686.1">
    <property type="nucleotide sequence ID" value="NC_005364.2"/>
</dbReference>
<dbReference type="RefSeq" id="WP_015545302.1">
    <property type="nucleotide sequence ID" value="NC_005364.2"/>
</dbReference>
<dbReference type="SMR" id="Q6MSR0"/>
<dbReference type="STRING" id="272632.MSC_0709"/>
<dbReference type="KEGG" id="mmy:MSC_0709"/>
<dbReference type="PATRIC" id="fig|272632.4.peg.763"/>
<dbReference type="eggNOG" id="COG0495">
    <property type="taxonomic scope" value="Bacteria"/>
</dbReference>
<dbReference type="HOGENOM" id="CLU_004427_0_0_14"/>
<dbReference type="Proteomes" id="UP000001016">
    <property type="component" value="Chromosome"/>
</dbReference>
<dbReference type="GO" id="GO:0005829">
    <property type="term" value="C:cytosol"/>
    <property type="evidence" value="ECO:0007669"/>
    <property type="project" value="TreeGrafter"/>
</dbReference>
<dbReference type="GO" id="GO:0002161">
    <property type="term" value="F:aminoacyl-tRNA deacylase activity"/>
    <property type="evidence" value="ECO:0007669"/>
    <property type="project" value="InterPro"/>
</dbReference>
<dbReference type="GO" id="GO:0005524">
    <property type="term" value="F:ATP binding"/>
    <property type="evidence" value="ECO:0007669"/>
    <property type="project" value="UniProtKB-UniRule"/>
</dbReference>
<dbReference type="GO" id="GO:0004823">
    <property type="term" value="F:leucine-tRNA ligase activity"/>
    <property type="evidence" value="ECO:0007669"/>
    <property type="project" value="UniProtKB-UniRule"/>
</dbReference>
<dbReference type="GO" id="GO:0006429">
    <property type="term" value="P:leucyl-tRNA aminoacylation"/>
    <property type="evidence" value="ECO:0007669"/>
    <property type="project" value="UniProtKB-UniRule"/>
</dbReference>
<dbReference type="CDD" id="cd07958">
    <property type="entry name" value="Anticodon_Ia_Leu_BEm"/>
    <property type="match status" value="1"/>
</dbReference>
<dbReference type="CDD" id="cd00812">
    <property type="entry name" value="LeuRS_core"/>
    <property type="match status" value="1"/>
</dbReference>
<dbReference type="FunFam" id="1.10.730.10:FF:000002">
    <property type="entry name" value="Leucine--tRNA ligase"/>
    <property type="match status" value="1"/>
</dbReference>
<dbReference type="FunFam" id="3.40.50.620:FF:000056">
    <property type="entry name" value="Leucine--tRNA ligase"/>
    <property type="match status" value="1"/>
</dbReference>
<dbReference type="FunFam" id="3.40.50.620:FF:000077">
    <property type="entry name" value="Leucine--tRNA ligase"/>
    <property type="match status" value="1"/>
</dbReference>
<dbReference type="Gene3D" id="3.40.50.620">
    <property type="entry name" value="HUPs"/>
    <property type="match status" value="2"/>
</dbReference>
<dbReference type="Gene3D" id="1.10.730.10">
    <property type="entry name" value="Isoleucyl-tRNA Synthetase, Domain 1"/>
    <property type="match status" value="1"/>
</dbReference>
<dbReference type="HAMAP" id="MF_00049_B">
    <property type="entry name" value="Leu_tRNA_synth_B"/>
    <property type="match status" value="1"/>
</dbReference>
<dbReference type="InterPro" id="IPR001412">
    <property type="entry name" value="aa-tRNA-synth_I_CS"/>
</dbReference>
<dbReference type="InterPro" id="IPR002300">
    <property type="entry name" value="aa-tRNA-synth_Ia"/>
</dbReference>
<dbReference type="InterPro" id="IPR002302">
    <property type="entry name" value="Leu-tRNA-ligase"/>
</dbReference>
<dbReference type="InterPro" id="IPR025709">
    <property type="entry name" value="Leu_tRNA-synth_edit"/>
</dbReference>
<dbReference type="InterPro" id="IPR013155">
    <property type="entry name" value="M/V/L/I-tRNA-synth_anticd-bd"/>
</dbReference>
<dbReference type="InterPro" id="IPR015413">
    <property type="entry name" value="Methionyl/Leucyl_tRNA_Synth"/>
</dbReference>
<dbReference type="InterPro" id="IPR014729">
    <property type="entry name" value="Rossmann-like_a/b/a_fold"/>
</dbReference>
<dbReference type="InterPro" id="IPR009080">
    <property type="entry name" value="tRNAsynth_Ia_anticodon-bd"/>
</dbReference>
<dbReference type="InterPro" id="IPR009008">
    <property type="entry name" value="Val/Leu/Ile-tRNA-synth_edit"/>
</dbReference>
<dbReference type="NCBIfam" id="TIGR00396">
    <property type="entry name" value="leuS_bact"/>
    <property type="match status" value="1"/>
</dbReference>
<dbReference type="PANTHER" id="PTHR43740:SF2">
    <property type="entry name" value="LEUCINE--TRNA LIGASE, MITOCHONDRIAL"/>
    <property type="match status" value="1"/>
</dbReference>
<dbReference type="PANTHER" id="PTHR43740">
    <property type="entry name" value="LEUCYL-TRNA SYNTHETASE"/>
    <property type="match status" value="1"/>
</dbReference>
<dbReference type="Pfam" id="PF08264">
    <property type="entry name" value="Anticodon_1"/>
    <property type="match status" value="1"/>
</dbReference>
<dbReference type="Pfam" id="PF00133">
    <property type="entry name" value="tRNA-synt_1"/>
    <property type="match status" value="1"/>
</dbReference>
<dbReference type="Pfam" id="PF13603">
    <property type="entry name" value="tRNA-synt_1_2"/>
    <property type="match status" value="1"/>
</dbReference>
<dbReference type="Pfam" id="PF09334">
    <property type="entry name" value="tRNA-synt_1g"/>
    <property type="match status" value="1"/>
</dbReference>
<dbReference type="PRINTS" id="PR00985">
    <property type="entry name" value="TRNASYNTHLEU"/>
</dbReference>
<dbReference type="SUPFAM" id="SSF47323">
    <property type="entry name" value="Anticodon-binding domain of a subclass of class I aminoacyl-tRNA synthetases"/>
    <property type="match status" value="1"/>
</dbReference>
<dbReference type="SUPFAM" id="SSF52374">
    <property type="entry name" value="Nucleotidylyl transferase"/>
    <property type="match status" value="1"/>
</dbReference>
<dbReference type="SUPFAM" id="SSF50677">
    <property type="entry name" value="ValRS/IleRS/LeuRS editing domain"/>
    <property type="match status" value="1"/>
</dbReference>
<dbReference type="PROSITE" id="PS00178">
    <property type="entry name" value="AA_TRNA_LIGASE_I"/>
    <property type="match status" value="1"/>
</dbReference>
<keyword id="KW-0030">Aminoacyl-tRNA synthetase</keyword>
<keyword id="KW-0067">ATP-binding</keyword>
<keyword id="KW-0963">Cytoplasm</keyword>
<keyword id="KW-0436">Ligase</keyword>
<keyword id="KW-0547">Nucleotide-binding</keyword>
<keyword id="KW-0648">Protein biosynthesis</keyword>
<keyword id="KW-1185">Reference proteome</keyword>
<accession>Q6MSR0</accession>
<comment type="catalytic activity">
    <reaction evidence="1">
        <text>tRNA(Leu) + L-leucine + ATP = L-leucyl-tRNA(Leu) + AMP + diphosphate</text>
        <dbReference type="Rhea" id="RHEA:11688"/>
        <dbReference type="Rhea" id="RHEA-COMP:9613"/>
        <dbReference type="Rhea" id="RHEA-COMP:9622"/>
        <dbReference type="ChEBI" id="CHEBI:30616"/>
        <dbReference type="ChEBI" id="CHEBI:33019"/>
        <dbReference type="ChEBI" id="CHEBI:57427"/>
        <dbReference type="ChEBI" id="CHEBI:78442"/>
        <dbReference type="ChEBI" id="CHEBI:78494"/>
        <dbReference type="ChEBI" id="CHEBI:456215"/>
        <dbReference type="EC" id="6.1.1.4"/>
    </reaction>
</comment>
<comment type="subcellular location">
    <subcellularLocation>
        <location evidence="1">Cytoplasm</location>
    </subcellularLocation>
</comment>
<comment type="similarity">
    <text evidence="1">Belongs to the class-I aminoacyl-tRNA synthetase family.</text>
</comment>
<comment type="sequence caution" evidence="2">
    <conflict type="erroneous initiation">
        <sequence resource="EMBL-CDS" id="CAE77328"/>
    </conflict>
</comment>
<organism>
    <name type="scientific">Mycoplasma mycoides subsp. mycoides SC (strain CCUG 32753 / NCTC 10114 / PG1)</name>
    <dbReference type="NCBI Taxonomy" id="272632"/>
    <lineage>
        <taxon>Bacteria</taxon>
        <taxon>Bacillati</taxon>
        <taxon>Mycoplasmatota</taxon>
        <taxon>Mollicutes</taxon>
        <taxon>Mycoplasmataceae</taxon>
        <taxon>Mycoplasma</taxon>
    </lineage>
</organism>
<name>SYL_MYCMS</name>
<protein>
    <recommendedName>
        <fullName evidence="1">Leucine--tRNA ligase</fullName>
        <ecNumber evidence="1">6.1.1.4</ecNumber>
    </recommendedName>
    <alternativeName>
        <fullName evidence="1">Leucyl-tRNA synthetase</fullName>
        <shortName evidence="1">LeuRS</shortName>
    </alternativeName>
</protein>
<evidence type="ECO:0000255" key="1">
    <source>
        <dbReference type="HAMAP-Rule" id="MF_00049"/>
    </source>
</evidence>
<evidence type="ECO:0000305" key="2"/>
<gene>
    <name evidence="1" type="primary">leuS</name>
    <name type="ordered locus">MSC_0709</name>
</gene>
<sequence>MDFSHKAIEKKWQKYWKENNIYKTTNNSEKKAYILDMFPYPSGAGLHVGHIKGYTATDVYSRFKRMQGYDVLHPIGWDAFGLPAEQYALKTGNDPREFTLQNIENFKIQLNKMGFSYDYDKEINTADPNYYKTTQWIFKQLYKKGLAENRDIDVNWCQELGTVLANDEIIEKDGLMVSERGEYPVVKKKMRQWVLKITDYADKLLDGLDNLDWPNSVKELQRNWIGKSEGCEINFKSNDINIPVFTTRADTIFGVTYIVLASENELVLKLTAPEKLEEVKKYIELTANKSEIERKDESRTKTGVFIGSYATNPLTKEQIQIWISDYVLNDYGSGAIMAVPAHDKRDWDFAAKFNLPIKFVIQTKDQSKAFVGEGIHINSEFLNDLDRIQALQVIHDYVDKNNLGKRKINYKLRDWLFSRQRFYGEPFPVLYDKDNNIVLIEDNNLPITLPITDYIKPTNTGESPLANVKNWVNVKIGDKEYKRETNTMPQSAASSWYFIAYILANSKNNLIDLTSDEAKKRLEKWLPVDLYIGGQEHAVGHLLYARFWTHFLYDLGLLPTNEPFKRLFNQGMILGPDNRKMSKSWGNVINPDDVIDTHGADALRLYEMFMGPLDASLPWSFDGLDASLKWLNRCYRMINKIEFSNTNNHKLDYVYNDVVKKVTQMIQELKFNTAISQLMVLVNAIYKEELNTVYKPYIEGFVKMLSLFAPHLSEELWEKLGNNSSVTLQTWPEFDETKIIKNAVVIALQVNGKLRSTIEVEKGTDKETLIKLAQENENIIRFIKDHKNLKYIAVVDRIVNIVIE</sequence>